<proteinExistence type="inferred from homology"/>
<feature type="chain" id="PRO_1000194327" description="Small ribosomal subunit protein uS2">
    <location>
        <begin position="1"/>
        <end position="268"/>
    </location>
</feature>
<protein>
    <recommendedName>
        <fullName evidence="1">Small ribosomal subunit protein uS2</fullName>
    </recommendedName>
    <alternativeName>
        <fullName evidence="2">30S ribosomal protein S2</fullName>
    </alternativeName>
</protein>
<comment type="similarity">
    <text evidence="1">Belongs to the universal ribosomal protein uS2 family.</text>
</comment>
<organism>
    <name type="scientific">Caulobacter vibrioides (strain NA1000 / CB15N)</name>
    <name type="common">Caulobacter crescentus</name>
    <dbReference type="NCBI Taxonomy" id="565050"/>
    <lineage>
        <taxon>Bacteria</taxon>
        <taxon>Pseudomonadati</taxon>
        <taxon>Pseudomonadota</taxon>
        <taxon>Alphaproteobacteria</taxon>
        <taxon>Caulobacterales</taxon>
        <taxon>Caulobacteraceae</taxon>
        <taxon>Caulobacter</taxon>
    </lineage>
</organism>
<accession>B8GWS3</accession>
<dbReference type="EMBL" id="CP001340">
    <property type="protein sequence ID" value="ACL95465.1"/>
    <property type="molecule type" value="Genomic_DNA"/>
</dbReference>
<dbReference type="RefSeq" id="WP_010919789.1">
    <property type="nucleotide sequence ID" value="NC_011916.1"/>
</dbReference>
<dbReference type="RefSeq" id="YP_002517373.1">
    <property type="nucleotide sequence ID" value="NC_011916.1"/>
</dbReference>
<dbReference type="SMR" id="B8GWS3"/>
<dbReference type="GeneID" id="7333328"/>
<dbReference type="KEGG" id="ccs:CCNA_02000"/>
<dbReference type="PATRIC" id="fig|565050.3.peg.1959"/>
<dbReference type="HOGENOM" id="CLU_040318_2_1_5"/>
<dbReference type="OrthoDB" id="9808036at2"/>
<dbReference type="PhylomeDB" id="B8GWS3"/>
<dbReference type="Proteomes" id="UP000001364">
    <property type="component" value="Chromosome"/>
</dbReference>
<dbReference type="GO" id="GO:0022627">
    <property type="term" value="C:cytosolic small ribosomal subunit"/>
    <property type="evidence" value="ECO:0007669"/>
    <property type="project" value="TreeGrafter"/>
</dbReference>
<dbReference type="GO" id="GO:0003735">
    <property type="term" value="F:structural constituent of ribosome"/>
    <property type="evidence" value="ECO:0007669"/>
    <property type="project" value="InterPro"/>
</dbReference>
<dbReference type="GO" id="GO:0006412">
    <property type="term" value="P:translation"/>
    <property type="evidence" value="ECO:0007669"/>
    <property type="project" value="UniProtKB-UniRule"/>
</dbReference>
<dbReference type="CDD" id="cd01425">
    <property type="entry name" value="RPS2"/>
    <property type="match status" value="1"/>
</dbReference>
<dbReference type="Gene3D" id="3.40.50.10490">
    <property type="entry name" value="Glucose-6-phosphate isomerase like protein, domain 1"/>
    <property type="match status" value="1"/>
</dbReference>
<dbReference type="Gene3D" id="1.10.287.610">
    <property type="entry name" value="Helix hairpin bin"/>
    <property type="match status" value="1"/>
</dbReference>
<dbReference type="HAMAP" id="MF_00291_B">
    <property type="entry name" value="Ribosomal_uS2_B"/>
    <property type="match status" value="1"/>
</dbReference>
<dbReference type="InterPro" id="IPR001865">
    <property type="entry name" value="Ribosomal_uS2"/>
</dbReference>
<dbReference type="InterPro" id="IPR005706">
    <property type="entry name" value="Ribosomal_uS2_bac/mit/plastid"/>
</dbReference>
<dbReference type="InterPro" id="IPR018130">
    <property type="entry name" value="Ribosomal_uS2_CS"/>
</dbReference>
<dbReference type="InterPro" id="IPR023591">
    <property type="entry name" value="Ribosomal_uS2_flav_dom_sf"/>
</dbReference>
<dbReference type="NCBIfam" id="TIGR01011">
    <property type="entry name" value="rpsB_bact"/>
    <property type="match status" value="1"/>
</dbReference>
<dbReference type="PANTHER" id="PTHR12534">
    <property type="entry name" value="30S RIBOSOMAL PROTEIN S2 PROKARYOTIC AND ORGANELLAR"/>
    <property type="match status" value="1"/>
</dbReference>
<dbReference type="PANTHER" id="PTHR12534:SF0">
    <property type="entry name" value="SMALL RIBOSOMAL SUBUNIT PROTEIN US2M"/>
    <property type="match status" value="1"/>
</dbReference>
<dbReference type="Pfam" id="PF00318">
    <property type="entry name" value="Ribosomal_S2"/>
    <property type="match status" value="1"/>
</dbReference>
<dbReference type="PRINTS" id="PR00395">
    <property type="entry name" value="RIBOSOMALS2"/>
</dbReference>
<dbReference type="SUPFAM" id="SSF52313">
    <property type="entry name" value="Ribosomal protein S2"/>
    <property type="match status" value="1"/>
</dbReference>
<dbReference type="PROSITE" id="PS00962">
    <property type="entry name" value="RIBOSOMAL_S2_1"/>
    <property type="match status" value="1"/>
</dbReference>
<dbReference type="PROSITE" id="PS00963">
    <property type="entry name" value="RIBOSOMAL_S2_2"/>
    <property type="match status" value="1"/>
</dbReference>
<evidence type="ECO:0000255" key="1">
    <source>
        <dbReference type="HAMAP-Rule" id="MF_00291"/>
    </source>
</evidence>
<evidence type="ECO:0000305" key="2"/>
<name>RS2_CAUVN</name>
<gene>
    <name evidence="1" type="primary">rpsB</name>
    <name type="ordered locus">CCNA_02000</name>
</gene>
<reference key="1">
    <citation type="journal article" date="2010" name="J. Bacteriol.">
        <title>The genetic basis of laboratory adaptation in Caulobacter crescentus.</title>
        <authorList>
            <person name="Marks M.E."/>
            <person name="Castro-Rojas C.M."/>
            <person name="Teiling C."/>
            <person name="Du L."/>
            <person name="Kapatral V."/>
            <person name="Walunas T.L."/>
            <person name="Crosson S."/>
        </authorList>
    </citation>
    <scope>NUCLEOTIDE SEQUENCE [LARGE SCALE GENOMIC DNA]</scope>
    <source>
        <strain>NA1000 / CB15N</strain>
    </source>
</reference>
<sequence>MALPEFSMRQLLEAGAHFGHQTHRWNPKMDRYIFGSRSNIHIIDLSQSIPLLHQALVKVREVAAAGGRVLFVGTKRQASDPVATAAKRCAQYYVNHRWLGGTLTNWRTVSGSIARLRELEGVLAGEGQGRSKKELLQLTRERDKLELSLGGIKDMGGIPDIMFVIDTNKEAIAILEARKLNIPVVAILDTNCDPDGITYPIPGNDDAARALQLYCDLIADAVLDGLAAGQAAAGVDLGASVAPVEPALARELAPEAPAAEAAPESAEG</sequence>
<keyword id="KW-1185">Reference proteome</keyword>
<keyword id="KW-0687">Ribonucleoprotein</keyword>
<keyword id="KW-0689">Ribosomal protein</keyword>